<sequence length="232" mass="26210">MNRKASVSKELNAKHSKILEALLKHPDNRECADCRSKAPRWASVNLGIFICMQCSGIHRSLGVHISQVRSITLDTWLPDQVAFMKSTGNAKGNEYWESELPQHFERSSSDTFIRAKYSEKRWVSPGAIQPAPIVSQLSCKVSHLVESGYKPETPKKARTLSLDEEILLHHVLQVTPPETRTRAGSVDMKENVYVVPLPEFKKPNQKNENFSSEVNQNRRTTIAPPSSWATFD</sequence>
<comment type="function">
    <text evidence="1">GTPase-activating protein (GAP) for ADP ribosylation factor (ARF).</text>
</comment>
<comment type="sequence caution" evidence="4">
    <conflict type="erroneous gene model prediction">
        <sequence resource="EMBL-CDS" id="BAB02056"/>
    </conflict>
</comment>
<organism>
    <name type="scientific">Arabidopsis thaliana</name>
    <name type="common">Mouse-ear cress</name>
    <dbReference type="NCBI Taxonomy" id="3702"/>
    <lineage>
        <taxon>Eukaryota</taxon>
        <taxon>Viridiplantae</taxon>
        <taxon>Streptophyta</taxon>
        <taxon>Embryophyta</taxon>
        <taxon>Tracheophyta</taxon>
        <taxon>Spermatophyta</taxon>
        <taxon>Magnoliopsida</taxon>
        <taxon>eudicotyledons</taxon>
        <taxon>Gunneridae</taxon>
        <taxon>Pentapetalae</taxon>
        <taxon>rosids</taxon>
        <taxon>malvids</taxon>
        <taxon>Brassicales</taxon>
        <taxon>Brassicaceae</taxon>
        <taxon>Camelineae</taxon>
        <taxon>Arabidopsis</taxon>
    </lineage>
</organism>
<gene>
    <name type="primary">AGD15</name>
    <name type="ordered locus">At3g17660</name>
    <name type="ORF">MKP6.22</name>
</gene>
<evidence type="ECO:0000250" key="1"/>
<evidence type="ECO:0000255" key="2">
    <source>
        <dbReference type="PROSITE-ProRule" id="PRU00288"/>
    </source>
</evidence>
<evidence type="ECO:0000256" key="3">
    <source>
        <dbReference type="SAM" id="MobiDB-lite"/>
    </source>
</evidence>
<evidence type="ECO:0000305" key="4"/>
<proteinExistence type="evidence at transcript level"/>
<accession>Q0WQQ1</accession>
<accession>Q9LUN1</accession>
<keyword id="KW-0343">GTPase activation</keyword>
<keyword id="KW-0479">Metal-binding</keyword>
<keyword id="KW-1185">Reference proteome</keyword>
<keyword id="KW-0862">Zinc</keyword>
<keyword id="KW-0863">Zinc-finger</keyword>
<feature type="chain" id="PRO_0000352506" description="Probable ADP-ribosylation factor GTPase-activating protein AGD15">
    <location>
        <begin position="1"/>
        <end position="232"/>
    </location>
</feature>
<feature type="domain" description="Arf-GAP" evidence="2">
    <location>
        <begin position="16"/>
        <end position="130"/>
    </location>
</feature>
<feature type="zinc finger region" description="C4-type" evidence="2">
    <location>
        <begin position="31"/>
        <end position="54"/>
    </location>
</feature>
<feature type="region of interest" description="Disordered" evidence="3">
    <location>
        <begin position="203"/>
        <end position="232"/>
    </location>
</feature>
<feature type="compositionally biased region" description="Polar residues" evidence="3">
    <location>
        <begin position="206"/>
        <end position="232"/>
    </location>
</feature>
<dbReference type="EMBL" id="AB022219">
    <property type="protein sequence ID" value="BAB02056.1"/>
    <property type="status" value="ALT_SEQ"/>
    <property type="molecule type" value="Genomic_DNA"/>
</dbReference>
<dbReference type="EMBL" id="CP002686">
    <property type="protein sequence ID" value="AEE75986.1"/>
    <property type="molecule type" value="Genomic_DNA"/>
</dbReference>
<dbReference type="EMBL" id="AK228639">
    <property type="protein sequence ID" value="BAF00548.1"/>
    <property type="molecule type" value="mRNA"/>
</dbReference>
<dbReference type="RefSeq" id="NP_188393.2">
    <property type="nucleotide sequence ID" value="NM_112647.4"/>
</dbReference>
<dbReference type="SMR" id="Q0WQQ1"/>
<dbReference type="FunCoup" id="Q0WQQ1">
    <property type="interactions" value="169"/>
</dbReference>
<dbReference type="STRING" id="3702.Q0WQQ1"/>
<dbReference type="iPTMnet" id="Q0WQQ1"/>
<dbReference type="PaxDb" id="3702-AT3G17660.1"/>
<dbReference type="ProteomicsDB" id="244673"/>
<dbReference type="EnsemblPlants" id="AT3G17660.1">
    <property type="protein sequence ID" value="AT3G17660.1"/>
    <property type="gene ID" value="AT3G17660"/>
</dbReference>
<dbReference type="GeneID" id="821033"/>
<dbReference type="Gramene" id="AT3G17660.1">
    <property type="protein sequence ID" value="AT3G17660.1"/>
    <property type="gene ID" value="AT3G17660"/>
</dbReference>
<dbReference type="KEGG" id="ath:AT3G17660"/>
<dbReference type="Araport" id="AT3G17660"/>
<dbReference type="TAIR" id="AT3G17660">
    <property type="gene designation" value="AGD15"/>
</dbReference>
<dbReference type="eggNOG" id="KOG0703">
    <property type="taxonomic scope" value="Eukaryota"/>
</dbReference>
<dbReference type="HOGENOM" id="CLU_023062_8_0_1"/>
<dbReference type="InParanoid" id="Q0WQQ1"/>
<dbReference type="OrthoDB" id="10266696at2759"/>
<dbReference type="PhylomeDB" id="Q0WQQ1"/>
<dbReference type="PRO" id="PR:Q0WQQ1"/>
<dbReference type="Proteomes" id="UP000006548">
    <property type="component" value="Chromosome 3"/>
</dbReference>
<dbReference type="ExpressionAtlas" id="Q0WQQ1">
    <property type="expression patterns" value="baseline and differential"/>
</dbReference>
<dbReference type="GO" id="GO:0005096">
    <property type="term" value="F:GTPase activator activity"/>
    <property type="evidence" value="ECO:0007669"/>
    <property type="project" value="UniProtKB-KW"/>
</dbReference>
<dbReference type="GO" id="GO:0008270">
    <property type="term" value="F:zinc ion binding"/>
    <property type="evidence" value="ECO:0007669"/>
    <property type="project" value="UniProtKB-KW"/>
</dbReference>
<dbReference type="CDD" id="cd08204">
    <property type="entry name" value="ArfGap"/>
    <property type="match status" value="1"/>
</dbReference>
<dbReference type="FunFam" id="1.10.220.150:FF:000009">
    <property type="entry name" value="stromal membrane-associated protein 1 isoform X1"/>
    <property type="match status" value="1"/>
</dbReference>
<dbReference type="Gene3D" id="1.10.220.150">
    <property type="entry name" value="Arf GTPase activating protein"/>
    <property type="match status" value="1"/>
</dbReference>
<dbReference type="InterPro" id="IPR044520">
    <property type="entry name" value="ARF_GAP_AGD5/15"/>
</dbReference>
<dbReference type="InterPro" id="IPR037278">
    <property type="entry name" value="ARFGAP/RecO"/>
</dbReference>
<dbReference type="InterPro" id="IPR001164">
    <property type="entry name" value="ArfGAP_dom"/>
</dbReference>
<dbReference type="InterPro" id="IPR038508">
    <property type="entry name" value="ArfGAP_dom_sf"/>
</dbReference>
<dbReference type="PANTHER" id="PTHR46419:SF3">
    <property type="entry name" value="ADP-RIBOSYLATION FACTOR GTPASE-ACTIVATING PROTEIN AGD15-RELATED"/>
    <property type="match status" value="1"/>
</dbReference>
<dbReference type="PANTHER" id="PTHR46419">
    <property type="entry name" value="ADP-RIBOSYLATION FACTOR GTPASE-ACTIVATING PROTEIN AGD5"/>
    <property type="match status" value="1"/>
</dbReference>
<dbReference type="Pfam" id="PF01412">
    <property type="entry name" value="ArfGap"/>
    <property type="match status" value="1"/>
</dbReference>
<dbReference type="PRINTS" id="PR00405">
    <property type="entry name" value="REVINTRACTNG"/>
</dbReference>
<dbReference type="SMART" id="SM00105">
    <property type="entry name" value="ArfGap"/>
    <property type="match status" value="1"/>
</dbReference>
<dbReference type="SUPFAM" id="SSF57863">
    <property type="entry name" value="ArfGap/RecO-like zinc finger"/>
    <property type="match status" value="1"/>
</dbReference>
<dbReference type="PROSITE" id="PS50115">
    <property type="entry name" value="ARFGAP"/>
    <property type="match status" value="1"/>
</dbReference>
<reference key="1">
    <citation type="journal article" date="2000" name="DNA Res.">
        <title>Structural analysis of Arabidopsis thaliana chromosome 3. I. Sequence features of the regions of 4,504,864 bp covered by sixty P1 and TAC clones.</title>
        <authorList>
            <person name="Sato S."/>
            <person name="Nakamura Y."/>
            <person name="Kaneko T."/>
            <person name="Katoh T."/>
            <person name="Asamizu E."/>
            <person name="Tabata S."/>
        </authorList>
    </citation>
    <scope>NUCLEOTIDE SEQUENCE [LARGE SCALE GENOMIC DNA]</scope>
    <source>
        <strain>cv. Columbia</strain>
    </source>
</reference>
<reference key="2">
    <citation type="journal article" date="2017" name="Plant J.">
        <title>Araport11: a complete reannotation of the Arabidopsis thaliana reference genome.</title>
        <authorList>
            <person name="Cheng C.Y."/>
            <person name="Krishnakumar V."/>
            <person name="Chan A.P."/>
            <person name="Thibaud-Nissen F."/>
            <person name="Schobel S."/>
            <person name="Town C.D."/>
        </authorList>
    </citation>
    <scope>GENOME REANNOTATION</scope>
    <source>
        <strain>cv. Columbia</strain>
    </source>
</reference>
<reference key="3">
    <citation type="submission" date="2006-07" db="EMBL/GenBank/DDBJ databases">
        <title>Large-scale analysis of RIKEN Arabidopsis full-length (RAFL) cDNAs.</title>
        <authorList>
            <person name="Totoki Y."/>
            <person name="Seki M."/>
            <person name="Ishida J."/>
            <person name="Nakajima M."/>
            <person name="Enju A."/>
            <person name="Kamiya A."/>
            <person name="Narusaka M."/>
            <person name="Shin-i T."/>
            <person name="Nakagawa M."/>
            <person name="Sakamoto N."/>
            <person name="Oishi K."/>
            <person name="Kohara Y."/>
            <person name="Kobayashi M."/>
            <person name="Toyoda A."/>
            <person name="Sakaki Y."/>
            <person name="Sakurai T."/>
            <person name="Iida K."/>
            <person name="Akiyama K."/>
            <person name="Satou M."/>
            <person name="Toyoda T."/>
            <person name="Konagaya A."/>
            <person name="Carninci P."/>
            <person name="Kawai J."/>
            <person name="Hayashizaki Y."/>
            <person name="Shinozaki K."/>
        </authorList>
    </citation>
    <scope>NUCLEOTIDE SEQUENCE [LARGE SCALE MRNA]</scope>
    <source>
        <strain>cv. Columbia</strain>
    </source>
</reference>
<reference key="4">
    <citation type="journal article" date="2003" name="Plant Physiol.">
        <title>Analysis of the small GTPase gene superfamily of Arabidopsis.</title>
        <authorList>
            <person name="Vernoud V."/>
            <person name="Horton A.C."/>
            <person name="Yang Z."/>
            <person name="Nielsen E."/>
        </authorList>
    </citation>
    <scope>GENE FAMILY</scope>
    <scope>NOMENCLATURE</scope>
</reference>
<name>AGD15_ARATH</name>
<protein>
    <recommendedName>
        <fullName>Probable ADP-ribosylation factor GTPase-activating protein AGD15</fullName>
        <shortName>ARF GAP AGD15</shortName>
    </recommendedName>
    <alternativeName>
        <fullName>Protein ARF-GAP DOMAIN 15</fullName>
        <shortName>AtAGD15</shortName>
    </alternativeName>
</protein>